<name>YIDD_BURPS</name>
<sequence length="89" mass="9817">MQTVLIALLRFYKLAVSPLLGSRCRFYPSCSDYAREAIQYHGAARGTYLAARRLCRCHPFSAGGVDLVPPPNSDARNAPHEAEASSHRL</sequence>
<proteinExistence type="inferred from homology"/>
<comment type="function">
    <text evidence="1">Could be involved in insertion of integral membrane proteins into the membrane.</text>
</comment>
<comment type="subcellular location">
    <subcellularLocation>
        <location evidence="1">Cell inner membrane</location>
        <topology evidence="1">Peripheral membrane protein</topology>
        <orientation evidence="1">Cytoplasmic side</orientation>
    </subcellularLocation>
</comment>
<comment type="similarity">
    <text evidence="1">Belongs to the UPF0161 family.</text>
</comment>
<feature type="chain" id="PRO_0000253088" description="Putative membrane protein insertion efficiency factor">
    <location>
        <begin position="1"/>
        <end position="89"/>
    </location>
</feature>
<feature type="region of interest" description="Disordered" evidence="2">
    <location>
        <begin position="68"/>
        <end position="89"/>
    </location>
</feature>
<feature type="compositionally biased region" description="Basic and acidic residues" evidence="2">
    <location>
        <begin position="77"/>
        <end position="89"/>
    </location>
</feature>
<reference key="1">
    <citation type="journal article" date="2004" name="Proc. Natl. Acad. Sci. U.S.A.">
        <title>Genomic plasticity of the causative agent of melioidosis, Burkholderia pseudomallei.</title>
        <authorList>
            <person name="Holden M.T.G."/>
            <person name="Titball R.W."/>
            <person name="Peacock S.J."/>
            <person name="Cerdeno-Tarraga A.-M."/>
            <person name="Atkins T."/>
            <person name="Crossman L.C."/>
            <person name="Pitt T."/>
            <person name="Churcher C."/>
            <person name="Mungall K.L."/>
            <person name="Bentley S.D."/>
            <person name="Sebaihia M."/>
            <person name="Thomson N.R."/>
            <person name="Bason N."/>
            <person name="Beacham I.R."/>
            <person name="Brooks K."/>
            <person name="Brown K.A."/>
            <person name="Brown N.F."/>
            <person name="Challis G.L."/>
            <person name="Cherevach I."/>
            <person name="Chillingworth T."/>
            <person name="Cronin A."/>
            <person name="Crossett B."/>
            <person name="Davis P."/>
            <person name="DeShazer D."/>
            <person name="Feltwell T."/>
            <person name="Fraser A."/>
            <person name="Hance Z."/>
            <person name="Hauser H."/>
            <person name="Holroyd S."/>
            <person name="Jagels K."/>
            <person name="Keith K.E."/>
            <person name="Maddison M."/>
            <person name="Moule S."/>
            <person name="Price C."/>
            <person name="Quail M.A."/>
            <person name="Rabbinowitsch E."/>
            <person name="Rutherford K."/>
            <person name="Sanders M."/>
            <person name="Simmonds M."/>
            <person name="Songsivilai S."/>
            <person name="Stevens K."/>
            <person name="Tumapa S."/>
            <person name="Vesaratchavest M."/>
            <person name="Whitehead S."/>
            <person name="Yeats C."/>
            <person name="Barrell B.G."/>
            <person name="Oyston P.C.F."/>
            <person name="Parkhill J."/>
        </authorList>
    </citation>
    <scope>NUCLEOTIDE SEQUENCE [LARGE SCALE GENOMIC DNA]</scope>
    <source>
        <strain>K96243</strain>
    </source>
</reference>
<accession>Q63YW2</accession>
<organism>
    <name type="scientific">Burkholderia pseudomallei (strain K96243)</name>
    <dbReference type="NCBI Taxonomy" id="272560"/>
    <lineage>
        <taxon>Bacteria</taxon>
        <taxon>Pseudomonadati</taxon>
        <taxon>Pseudomonadota</taxon>
        <taxon>Betaproteobacteria</taxon>
        <taxon>Burkholderiales</taxon>
        <taxon>Burkholderiaceae</taxon>
        <taxon>Burkholderia</taxon>
        <taxon>pseudomallei group</taxon>
    </lineage>
</organism>
<protein>
    <recommendedName>
        <fullName evidence="1">Putative membrane protein insertion efficiency factor</fullName>
    </recommendedName>
</protein>
<evidence type="ECO:0000255" key="1">
    <source>
        <dbReference type="HAMAP-Rule" id="MF_00386"/>
    </source>
</evidence>
<evidence type="ECO:0000256" key="2">
    <source>
        <dbReference type="SAM" id="MobiDB-lite"/>
    </source>
</evidence>
<dbReference type="EMBL" id="BX571965">
    <property type="protein sequence ID" value="CAH34061.1"/>
    <property type="molecule type" value="Genomic_DNA"/>
</dbReference>
<dbReference type="RefSeq" id="YP_106703.1">
    <property type="nucleotide sequence ID" value="NC_006350.1"/>
</dbReference>
<dbReference type="STRING" id="272560.BPSL0077"/>
<dbReference type="KEGG" id="bps:BPSL0077"/>
<dbReference type="PATRIC" id="fig|272560.6.peg.87"/>
<dbReference type="eggNOG" id="COG0759">
    <property type="taxonomic scope" value="Bacteria"/>
</dbReference>
<dbReference type="Proteomes" id="UP000000605">
    <property type="component" value="Chromosome 1"/>
</dbReference>
<dbReference type="GO" id="GO:0005886">
    <property type="term" value="C:plasma membrane"/>
    <property type="evidence" value="ECO:0007669"/>
    <property type="project" value="UniProtKB-SubCell"/>
</dbReference>
<dbReference type="HAMAP" id="MF_00386">
    <property type="entry name" value="UPF0161_YidD"/>
    <property type="match status" value="1"/>
</dbReference>
<dbReference type="InterPro" id="IPR002696">
    <property type="entry name" value="Membr_insert_effic_factor_YidD"/>
</dbReference>
<dbReference type="NCBIfam" id="TIGR00278">
    <property type="entry name" value="membrane protein insertion efficiency factor YidD"/>
    <property type="match status" value="1"/>
</dbReference>
<dbReference type="PANTHER" id="PTHR33383">
    <property type="entry name" value="MEMBRANE PROTEIN INSERTION EFFICIENCY FACTOR-RELATED"/>
    <property type="match status" value="1"/>
</dbReference>
<dbReference type="PANTHER" id="PTHR33383:SF1">
    <property type="entry name" value="MEMBRANE PROTEIN INSERTION EFFICIENCY FACTOR-RELATED"/>
    <property type="match status" value="1"/>
</dbReference>
<dbReference type="Pfam" id="PF01809">
    <property type="entry name" value="YidD"/>
    <property type="match status" value="1"/>
</dbReference>
<dbReference type="SMART" id="SM01234">
    <property type="entry name" value="Haemolytic"/>
    <property type="match status" value="1"/>
</dbReference>
<keyword id="KW-0997">Cell inner membrane</keyword>
<keyword id="KW-1003">Cell membrane</keyword>
<keyword id="KW-0472">Membrane</keyword>
<keyword id="KW-1185">Reference proteome</keyword>
<gene>
    <name type="ordered locus">BPSL0077</name>
</gene>